<reference key="1">
    <citation type="journal article" date="2004" name="Proc. Natl. Acad. Sci. U.S.A.">
        <title>The diploid genome sequence of Candida albicans.</title>
        <authorList>
            <person name="Jones T."/>
            <person name="Federspiel N.A."/>
            <person name="Chibana H."/>
            <person name="Dungan J."/>
            <person name="Kalman S."/>
            <person name="Magee B.B."/>
            <person name="Newport G."/>
            <person name="Thorstenson Y.R."/>
            <person name="Agabian N."/>
            <person name="Magee P.T."/>
            <person name="Davis R.W."/>
            <person name="Scherer S."/>
        </authorList>
    </citation>
    <scope>NUCLEOTIDE SEQUENCE [LARGE SCALE GENOMIC DNA]</scope>
    <source>
        <strain>SC5314 / ATCC MYA-2876</strain>
    </source>
</reference>
<reference key="2">
    <citation type="journal article" date="2007" name="Genome Biol.">
        <title>Assembly of the Candida albicans genome into sixteen supercontigs aligned on the eight chromosomes.</title>
        <authorList>
            <person name="van het Hoog M."/>
            <person name="Rast T.J."/>
            <person name="Martchenko M."/>
            <person name="Grindle S."/>
            <person name="Dignard D."/>
            <person name="Hogues H."/>
            <person name="Cuomo C."/>
            <person name="Berriman M."/>
            <person name="Scherer S."/>
            <person name="Magee B.B."/>
            <person name="Whiteway M."/>
            <person name="Chibana H."/>
            <person name="Nantel A."/>
            <person name="Magee P.T."/>
        </authorList>
    </citation>
    <scope>GENOME REANNOTATION</scope>
    <source>
        <strain>SC5314 / ATCC MYA-2876</strain>
    </source>
</reference>
<reference key="3">
    <citation type="journal article" date="2013" name="Genome Biol.">
        <title>Assembly of a phased diploid Candida albicans genome facilitates allele-specific measurements and provides a simple model for repeat and indel structure.</title>
        <authorList>
            <person name="Muzzey D."/>
            <person name="Schwartz K."/>
            <person name="Weissman J.S."/>
            <person name="Sherlock G."/>
        </authorList>
    </citation>
    <scope>NUCLEOTIDE SEQUENCE [LARGE SCALE GENOMIC DNA]</scope>
    <scope>GENOME REANNOTATION</scope>
    <source>
        <strain>SC5314 / ATCC MYA-2876</strain>
    </source>
</reference>
<comment type="function">
    <text evidence="1">Acts as a component of the essential kinetochore-associated NDC80 complex, which is required for chromosome segregation and spindle checkpoint activity.</text>
</comment>
<comment type="subunit">
    <text evidence="1">Component of the NDC80 complex, which consists of NDC80, NUF2, SPC24 and SPC25.</text>
</comment>
<comment type="subcellular location">
    <subcellularLocation>
        <location evidence="1">Nucleus</location>
    </subcellularLocation>
    <subcellularLocation>
        <location evidence="1">Chromosome</location>
        <location evidence="1">Centromere</location>
        <location evidence="1">Kinetochore</location>
    </subcellularLocation>
    <text evidence="1">Associated with kinetochores.</text>
</comment>
<comment type="similarity">
    <text evidence="4">Belongs to the NUF2 family.</text>
</comment>
<comment type="sequence caution" evidence="4">
    <conflict type="erroneous initiation">
        <sequence resource="EMBL-CDS" id="AOW29563"/>
    </conflict>
    <text>Truncated N-terminus.</text>
</comment>
<name>NUF2_CANAL</name>
<protein>
    <recommendedName>
        <fullName>Probable kinetochore protein NUF2</fullName>
    </recommendedName>
</protein>
<dbReference type="EMBL" id="CP017627">
    <property type="protein sequence ID" value="AOW29563.1"/>
    <property type="status" value="ALT_INIT"/>
    <property type="molecule type" value="Genomic_DNA"/>
</dbReference>
<dbReference type="RefSeq" id="XP_715704.2">
    <property type="nucleotide sequence ID" value="XM_710611.2"/>
</dbReference>
<dbReference type="SMR" id="Q5A1Q5"/>
<dbReference type="BioGRID" id="1225707">
    <property type="interactions" value="1"/>
</dbReference>
<dbReference type="FunCoup" id="Q5A1Q5">
    <property type="interactions" value="331"/>
</dbReference>
<dbReference type="STRING" id="237561.Q5A1Q5"/>
<dbReference type="PeptideAtlas" id="Q5A1Q5"/>
<dbReference type="GeneID" id="3642613"/>
<dbReference type="KEGG" id="cal:CAALFM_C501280CA"/>
<dbReference type="eggNOG" id="KOG4438">
    <property type="taxonomic scope" value="Eukaryota"/>
</dbReference>
<dbReference type="HOGENOM" id="CLU_025461_2_0_1"/>
<dbReference type="InParanoid" id="Q5A1Q5"/>
<dbReference type="OrthoDB" id="8194677at2759"/>
<dbReference type="PRO" id="PR:Q5A1Q5"/>
<dbReference type="Proteomes" id="UP000000559">
    <property type="component" value="Chromosome 5"/>
</dbReference>
<dbReference type="GO" id="GO:0016020">
    <property type="term" value="C:membrane"/>
    <property type="evidence" value="ECO:0007669"/>
    <property type="project" value="InterPro"/>
</dbReference>
<dbReference type="GO" id="GO:0031262">
    <property type="term" value="C:Ndc80 complex"/>
    <property type="evidence" value="ECO:0000250"/>
    <property type="project" value="UniProtKB"/>
</dbReference>
<dbReference type="GO" id="GO:0005634">
    <property type="term" value="C:nucleus"/>
    <property type="evidence" value="ECO:0007669"/>
    <property type="project" value="UniProtKB-SubCell"/>
</dbReference>
<dbReference type="GO" id="GO:0008017">
    <property type="term" value="F:microtubule binding"/>
    <property type="evidence" value="ECO:0000250"/>
    <property type="project" value="UniProtKB"/>
</dbReference>
<dbReference type="GO" id="GO:0044877">
    <property type="term" value="F:protein-containing complex binding"/>
    <property type="evidence" value="ECO:0000318"/>
    <property type="project" value="GO_Central"/>
</dbReference>
<dbReference type="GO" id="GO:0051315">
    <property type="term" value="P:attachment of mitotic spindle microtubules to kinetochore"/>
    <property type="evidence" value="ECO:0000318"/>
    <property type="project" value="GO_Central"/>
</dbReference>
<dbReference type="GO" id="GO:0051301">
    <property type="term" value="P:cell division"/>
    <property type="evidence" value="ECO:0007669"/>
    <property type="project" value="UniProtKB-KW"/>
</dbReference>
<dbReference type="GO" id="GO:0051383">
    <property type="term" value="P:kinetochore organization"/>
    <property type="evidence" value="ECO:0000318"/>
    <property type="project" value="GO_Central"/>
</dbReference>
<dbReference type="GO" id="GO:0045132">
    <property type="term" value="P:meiotic chromosome segregation"/>
    <property type="evidence" value="ECO:0000318"/>
    <property type="project" value="GO_Central"/>
</dbReference>
<dbReference type="GO" id="GO:0007052">
    <property type="term" value="P:mitotic spindle organization"/>
    <property type="evidence" value="ECO:0000318"/>
    <property type="project" value="GO_Central"/>
</dbReference>
<dbReference type="GO" id="GO:0016192">
    <property type="term" value="P:vesicle-mediated transport"/>
    <property type="evidence" value="ECO:0007669"/>
    <property type="project" value="InterPro"/>
</dbReference>
<dbReference type="FunFam" id="1.10.418.60:FF:000009">
    <property type="entry name" value="Probable kinetochore protein NUF2"/>
    <property type="match status" value="1"/>
</dbReference>
<dbReference type="Gene3D" id="1.10.418.60">
    <property type="entry name" value="Ncd80 complex, Nuf2 subunit"/>
    <property type="match status" value="1"/>
</dbReference>
<dbReference type="InterPro" id="IPR005549">
    <property type="entry name" value="Kinetochore_Nuf2_N"/>
</dbReference>
<dbReference type="InterPro" id="IPR041112">
    <property type="entry name" value="Nuf2_DHR10-like"/>
</dbReference>
<dbReference type="InterPro" id="IPR038275">
    <property type="entry name" value="Nuf2_N_sf"/>
</dbReference>
<dbReference type="InterPro" id="IPR010989">
    <property type="entry name" value="SNARE"/>
</dbReference>
<dbReference type="PANTHER" id="PTHR21650:SF2">
    <property type="entry name" value="KINETOCHORE PROTEIN NUF2"/>
    <property type="match status" value="1"/>
</dbReference>
<dbReference type="PANTHER" id="PTHR21650">
    <property type="entry name" value="MEMBRALIN/KINETOCHORE PROTEIN NUF2"/>
    <property type="match status" value="1"/>
</dbReference>
<dbReference type="Pfam" id="PF03800">
    <property type="entry name" value="Nuf2"/>
    <property type="match status" value="1"/>
</dbReference>
<dbReference type="Pfam" id="PF18595">
    <property type="entry name" value="Nuf2_DHR10-like"/>
    <property type="match status" value="1"/>
</dbReference>
<dbReference type="SUPFAM" id="SSF47661">
    <property type="entry name" value="t-snare proteins"/>
    <property type="match status" value="1"/>
</dbReference>
<accession>Q5A1Q5</accession>
<accession>A0A1D8PN70</accession>
<sequence length="485" mass="56646">MSRQSFYADPSSAGRQMKYRKDLFPLLDTREITACLLECEFNVTQELIVKPTADFVTNLFEQFLDTFMGIPLGTIRKKARKMSRINPLESDQANGKPQQSPEEDFNDNQENDKTKDTFSALQLLILHRYLAIFFSTCGINDFVLTDIARPDGYRIRRILSAVINFIRFREDQSPKFDHLANECEATADKVSEVQAENSATMQKINAIKEKLEMDSENDESNRKNLQYINSYNRKLETKLRELKVMQERLTKEHDDYKQEKALLAKKLYDINFLYNETQEQVANLTKYAETDLSILVKITEDLSNDLSSMQTNYKNLEKSYQNMGITIDSIQVNEINLKDLLKLAEDITRNVEKRQIEGKILKDNQDNLDELTRKQMELEGQILIVQNQLNKSNKKYQDLIVQADKKESAVKLKLEETKQEFNDILSEKEKHNEEHKRIMDQIVKIQQETTAIQDAFVKESKEVELKLINLMSIIKRYMSDLRNNI</sequence>
<proteinExistence type="inferred from homology"/>
<feature type="chain" id="PRO_0000246647" description="Probable kinetochore protein NUF2">
    <location>
        <begin position="1"/>
        <end position="485"/>
    </location>
</feature>
<feature type="region of interest" description="Disordered" evidence="3">
    <location>
        <begin position="87"/>
        <end position="112"/>
    </location>
</feature>
<feature type="coiled-coil region" evidence="2">
    <location>
        <begin position="177"/>
        <end position="449"/>
    </location>
</feature>
<feature type="compositionally biased region" description="Polar residues" evidence="3">
    <location>
        <begin position="89"/>
        <end position="100"/>
    </location>
</feature>
<organism>
    <name type="scientific">Candida albicans (strain SC5314 / ATCC MYA-2876)</name>
    <name type="common">Yeast</name>
    <dbReference type="NCBI Taxonomy" id="237561"/>
    <lineage>
        <taxon>Eukaryota</taxon>
        <taxon>Fungi</taxon>
        <taxon>Dikarya</taxon>
        <taxon>Ascomycota</taxon>
        <taxon>Saccharomycotina</taxon>
        <taxon>Pichiomycetes</taxon>
        <taxon>Debaryomycetaceae</taxon>
        <taxon>Candida/Lodderomyces clade</taxon>
        <taxon>Candida</taxon>
    </lineage>
</organism>
<keyword id="KW-0131">Cell cycle</keyword>
<keyword id="KW-0132">Cell division</keyword>
<keyword id="KW-0137">Centromere</keyword>
<keyword id="KW-0158">Chromosome</keyword>
<keyword id="KW-0175">Coiled coil</keyword>
<keyword id="KW-0995">Kinetochore</keyword>
<keyword id="KW-0498">Mitosis</keyword>
<keyword id="KW-0539">Nucleus</keyword>
<keyword id="KW-1185">Reference proteome</keyword>
<evidence type="ECO:0000250" key="1"/>
<evidence type="ECO:0000255" key="2"/>
<evidence type="ECO:0000256" key="3">
    <source>
        <dbReference type="SAM" id="MobiDB-lite"/>
    </source>
</evidence>
<evidence type="ECO:0000305" key="4"/>
<gene>
    <name type="primary">NUF2</name>
    <name type="ordered locus">CAALFM_C501280CA</name>
    <name type="ORF">CaO19.1941</name>
    <name type="ORF">CaO19.9496</name>
</gene>